<protein>
    <recommendedName>
        <fullName evidence="1">Protein-export protein SecB</fullName>
    </recommendedName>
</protein>
<dbReference type="EMBL" id="CP000542">
    <property type="protein sequence ID" value="ABM55834.1"/>
    <property type="status" value="ALT_INIT"/>
    <property type="molecule type" value="Genomic_DNA"/>
</dbReference>
<dbReference type="RefSeq" id="WP_041949686.1">
    <property type="nucleotide sequence ID" value="NC_008786.1"/>
</dbReference>
<dbReference type="SMR" id="A1WDX7"/>
<dbReference type="STRING" id="391735.Veis_0041"/>
<dbReference type="GeneID" id="76458799"/>
<dbReference type="KEGG" id="vei:Veis_0041"/>
<dbReference type="eggNOG" id="COG1952">
    <property type="taxonomic scope" value="Bacteria"/>
</dbReference>
<dbReference type="HOGENOM" id="CLU_111574_1_0_4"/>
<dbReference type="OrthoDB" id="9795145at2"/>
<dbReference type="Proteomes" id="UP000000374">
    <property type="component" value="Chromosome"/>
</dbReference>
<dbReference type="GO" id="GO:0005737">
    <property type="term" value="C:cytoplasm"/>
    <property type="evidence" value="ECO:0007669"/>
    <property type="project" value="UniProtKB-SubCell"/>
</dbReference>
<dbReference type="GO" id="GO:0051082">
    <property type="term" value="F:unfolded protein binding"/>
    <property type="evidence" value="ECO:0007669"/>
    <property type="project" value="InterPro"/>
</dbReference>
<dbReference type="GO" id="GO:0006457">
    <property type="term" value="P:protein folding"/>
    <property type="evidence" value="ECO:0007669"/>
    <property type="project" value="UniProtKB-UniRule"/>
</dbReference>
<dbReference type="GO" id="GO:0051262">
    <property type="term" value="P:protein tetramerization"/>
    <property type="evidence" value="ECO:0007669"/>
    <property type="project" value="InterPro"/>
</dbReference>
<dbReference type="GO" id="GO:0015031">
    <property type="term" value="P:protein transport"/>
    <property type="evidence" value="ECO:0007669"/>
    <property type="project" value="UniProtKB-UniRule"/>
</dbReference>
<dbReference type="Gene3D" id="3.10.420.10">
    <property type="entry name" value="SecB-like"/>
    <property type="match status" value="1"/>
</dbReference>
<dbReference type="HAMAP" id="MF_00821">
    <property type="entry name" value="SecB"/>
    <property type="match status" value="1"/>
</dbReference>
<dbReference type="InterPro" id="IPR003708">
    <property type="entry name" value="SecB"/>
</dbReference>
<dbReference type="InterPro" id="IPR035958">
    <property type="entry name" value="SecB-like_sf"/>
</dbReference>
<dbReference type="NCBIfam" id="NF004394">
    <property type="entry name" value="PRK05751.1-5"/>
    <property type="match status" value="1"/>
</dbReference>
<dbReference type="NCBIfam" id="TIGR00809">
    <property type="entry name" value="secB"/>
    <property type="match status" value="1"/>
</dbReference>
<dbReference type="PANTHER" id="PTHR36918">
    <property type="match status" value="1"/>
</dbReference>
<dbReference type="PANTHER" id="PTHR36918:SF1">
    <property type="entry name" value="PROTEIN-EXPORT PROTEIN SECB"/>
    <property type="match status" value="1"/>
</dbReference>
<dbReference type="Pfam" id="PF02556">
    <property type="entry name" value="SecB"/>
    <property type="match status" value="1"/>
</dbReference>
<dbReference type="PRINTS" id="PR01594">
    <property type="entry name" value="SECBCHAPRONE"/>
</dbReference>
<dbReference type="SUPFAM" id="SSF54611">
    <property type="entry name" value="SecB-like"/>
    <property type="match status" value="1"/>
</dbReference>
<proteinExistence type="inferred from homology"/>
<sequence>MADQDNPVFQIQRVYLKDLSLEQPNSPAILLEQEQPNLDIQLGVEATPVGEGFFEVAVTATVQTKIKDKTMFLVEAKQAAIFEIRNVPEDQMGQIMGVVCPQIVYPYLRGNVADVINRAGFPPVHLGEINFQGMYEQQQAQAAGAAAPVTTQ</sequence>
<comment type="function">
    <text evidence="1">One of the proteins required for the normal export of preproteins out of the cell cytoplasm. It is a molecular chaperone that binds to a subset of precursor proteins, maintaining them in a translocation-competent state. It also specifically binds to its receptor SecA.</text>
</comment>
<comment type="subunit">
    <text evidence="1">Homotetramer, a dimer of dimers. One homotetramer interacts with 1 SecA dimer.</text>
</comment>
<comment type="subcellular location">
    <subcellularLocation>
        <location evidence="1">Cytoplasm</location>
    </subcellularLocation>
</comment>
<comment type="similarity">
    <text evidence="1">Belongs to the SecB family.</text>
</comment>
<comment type="sequence caution" evidence="2">
    <conflict type="erroneous initiation">
        <sequence resource="EMBL-CDS" id="ABM55834"/>
    </conflict>
</comment>
<feature type="chain" id="PRO_0000318269" description="Protein-export protein SecB">
    <location>
        <begin position="1"/>
        <end position="152"/>
    </location>
</feature>
<reference key="1">
    <citation type="submission" date="2006-12" db="EMBL/GenBank/DDBJ databases">
        <title>Complete sequence of chromosome 1 of Verminephrobacter eiseniae EF01-2.</title>
        <authorList>
            <person name="Copeland A."/>
            <person name="Lucas S."/>
            <person name="Lapidus A."/>
            <person name="Barry K."/>
            <person name="Detter J.C."/>
            <person name="Glavina del Rio T."/>
            <person name="Dalin E."/>
            <person name="Tice H."/>
            <person name="Pitluck S."/>
            <person name="Chertkov O."/>
            <person name="Brettin T."/>
            <person name="Bruce D."/>
            <person name="Han C."/>
            <person name="Tapia R."/>
            <person name="Gilna P."/>
            <person name="Schmutz J."/>
            <person name="Larimer F."/>
            <person name="Land M."/>
            <person name="Hauser L."/>
            <person name="Kyrpides N."/>
            <person name="Kim E."/>
            <person name="Stahl D."/>
            <person name="Richardson P."/>
        </authorList>
    </citation>
    <scope>NUCLEOTIDE SEQUENCE [LARGE SCALE GENOMIC DNA]</scope>
    <source>
        <strain>EF01-2</strain>
    </source>
</reference>
<evidence type="ECO:0000255" key="1">
    <source>
        <dbReference type="HAMAP-Rule" id="MF_00821"/>
    </source>
</evidence>
<evidence type="ECO:0000305" key="2"/>
<accession>A1WDX7</accession>
<keyword id="KW-0143">Chaperone</keyword>
<keyword id="KW-0963">Cytoplasm</keyword>
<keyword id="KW-0653">Protein transport</keyword>
<keyword id="KW-1185">Reference proteome</keyword>
<keyword id="KW-0811">Translocation</keyword>
<keyword id="KW-0813">Transport</keyword>
<gene>
    <name evidence="1" type="primary">secB</name>
    <name type="ordered locus">Veis_0041</name>
</gene>
<organism>
    <name type="scientific">Verminephrobacter eiseniae (strain EF01-2)</name>
    <dbReference type="NCBI Taxonomy" id="391735"/>
    <lineage>
        <taxon>Bacteria</taxon>
        <taxon>Pseudomonadati</taxon>
        <taxon>Pseudomonadota</taxon>
        <taxon>Betaproteobacteria</taxon>
        <taxon>Burkholderiales</taxon>
        <taxon>Comamonadaceae</taxon>
        <taxon>Verminephrobacter</taxon>
    </lineage>
</organism>
<name>SECB_VEREI</name>